<protein>
    <recommendedName>
        <fullName>Nucleoporin NUP159</fullName>
    </recommendedName>
    <alternativeName>
        <fullName>Nuclear pore protein NUP159</fullName>
    </alternativeName>
</protein>
<proteinExistence type="evidence at protein level"/>
<name>NU159_YEAST</name>
<comment type="function">
    <text evidence="2 4 5 6 7 8 9 10 12 13 19 20 21">Functions as a component of the nuclear pore complex (NPC). NPC components, collectively referred to as nucleoporins (NUPs), can play the role of both NPC structural components and of docking or interaction partners for transiently associated nuclear transport factors. Active directional transport is assured by both, a Phe-Gly (FG) repeat affinity gradient for these transport factors across the NPC and a transport cofactor concentration gradient across the nuclear envelope (GSP1 and GSP2 GTPases associated predominantly with GTP in the nucleus, with GDP in the cytoplasm). NUP159 plays an important role in several nuclear export pathways including poly(A)+ RNA, pre-ribosome, and protein export.</text>
</comment>
<comment type="subunit">
    <text evidence="2 5 6 9 13 14 15 16 17 18 19 20 21">Component of the nuclear pore complex (NPC) (PubMed:17546040). NPC constitutes the exclusive means of nucleocytoplasmic transport. NPCs allow the passive diffusion of ions and small molecules and the active, nuclear transport receptor-mediated bidirectional transport of macromolecules such as proteins, RNAs, ribonucleoparticles (RNPs), and ribosomal subunits across the nuclear envelope. Due to its 8-fold rotational symmetry, all subunits are present with 8 copies or multiples thereof. Part of the NUP82 subcomplex, interacts with NUP82 through its C-terminal coiled coil (PubMed:17546040, PubMed:23223634, PubMed:25646085, PubMed:9736720). This subcomplex is the base for interactions with NUP116 and GLE2, with NUP42 and GLE1 and with DYN2 (PubMed:17546040, PubMed:23223634). Interacts directly with DYN2 (PubMed:17546040, PubMed:23223634, PubMed:25646085). Interacts through its FG repeats with karyopherins, such as heterodimeric mRNA transport factor MEX67/MTR2, CRM1 (XPO1), and PSE1 (GSP1-GDP dependent). Interaction with CRM1 (XPO1) is GSP1-GTP dependent and stimulated by RNA1. NUP159 also interacts with GLE1 and the ATP-dependent RNA helicase DBP5.</text>
</comment>
<comment type="interaction">
    <interactant intactId="EBI-11747">
        <id>P40477</id>
    </interactant>
    <interactant intactId="EBI-9145">
        <id>Q06142</id>
        <label>KAP95</label>
    </interactant>
    <organismsDiffer>false</organismsDiffer>
    <experiments>3</experiments>
</comment>
<comment type="interaction">
    <interactant intactId="EBI-11747">
        <id>P40477</id>
    </interactant>
    <interactant intactId="EBI-12331">
        <id>P40368</id>
        <label>NUP82</label>
    </interactant>
    <organismsDiffer>false</organismsDiffer>
    <experiments>6</experiments>
</comment>
<comment type="subcellular location">
    <subcellularLocation>
        <location evidence="3 14 17 18">Nucleus</location>
        <location evidence="3 14 17 18">Nuclear pore complex</location>
    </subcellularLocation>
    <subcellularLocation>
        <location>Nucleus membrane</location>
        <topology>Peripheral membrane protein</topology>
        <orientation>Cytoplasmic side</orientation>
    </subcellularLocation>
</comment>
<comment type="domain">
    <text>Contains FG repeats. FG repeats are interaction sites for karyopherins (importins, exportins) and form probably an affinity gradient, guiding the transport proteins unidirectionally with their cargo through the NPC. FG repeat regions are highly flexible and lack ordered secondary structure. The overall conservation of FG repeats regarding exact sequence, spacing, and repeat unit length is limited. FG repeat types and their physico-chemical environment change across the NPC from the nucleoplasmic to the cytoplasmic side: SXFG/PXFG repeats are especially abundant in NUPs on the cytoplasmic side.</text>
</comment>
<comment type="miscellaneous">
    <text evidence="11">Present with 1230 molecules/cell in log phase SD medium.</text>
</comment>
<dbReference type="EMBL" id="L40634">
    <property type="protein sequence ID" value="AAC41652.1"/>
    <property type="molecule type" value="Genomic_DNA"/>
</dbReference>
<dbReference type="EMBL" id="Z38125">
    <property type="protein sequence ID" value="CAA86265.1"/>
    <property type="molecule type" value="Genomic_DNA"/>
</dbReference>
<dbReference type="EMBL" id="BK006942">
    <property type="protein sequence ID" value="DAA08438.1"/>
    <property type="molecule type" value="Genomic_DNA"/>
</dbReference>
<dbReference type="PIR" id="S48457">
    <property type="entry name" value="S48457"/>
</dbReference>
<dbReference type="RefSeq" id="NP_012151.1">
    <property type="nucleotide sequence ID" value="NM_001179463.1"/>
</dbReference>
<dbReference type="PDB" id="1XIP">
    <property type="method" value="X-ray"/>
    <property type="resolution" value="2.50 A"/>
    <property type="chains" value="A=2-387"/>
</dbReference>
<dbReference type="PDB" id="3PBP">
    <property type="method" value="X-ray"/>
    <property type="resolution" value="2.60 A"/>
    <property type="chains" value="C/F/I/L=1425-1460"/>
</dbReference>
<dbReference type="PDB" id="3RRM">
    <property type="method" value="X-ray"/>
    <property type="resolution" value="2.88 A"/>
    <property type="chains" value="C=2-387"/>
</dbReference>
<dbReference type="PDB" id="3TKN">
    <property type="method" value="X-ray"/>
    <property type="resolution" value="3.40 A"/>
    <property type="chains" value="B/E/H=1425-1460"/>
</dbReference>
<dbReference type="PDB" id="4DS1">
    <property type="method" value="X-ray"/>
    <property type="resolution" value="1.85 A"/>
    <property type="chains" value="B/D=1116-1126"/>
</dbReference>
<dbReference type="PDB" id="7N9F">
    <property type="method" value="EM"/>
    <property type="resolution" value="37.00 A"/>
    <property type="chains" value="w/x=1-1460"/>
</dbReference>
<dbReference type="PDBsum" id="1XIP"/>
<dbReference type="PDBsum" id="3PBP"/>
<dbReference type="PDBsum" id="3RRM"/>
<dbReference type="PDBsum" id="3TKN"/>
<dbReference type="PDBsum" id="4DS1"/>
<dbReference type="PDBsum" id="7N9F"/>
<dbReference type="EMDB" id="EMD-24258"/>
<dbReference type="SMR" id="P40477"/>
<dbReference type="BioGRID" id="34876">
    <property type="interactions" value="259"/>
</dbReference>
<dbReference type="ComplexPortal" id="CPX-824">
    <property type="entry name" value="Nuclear pore complex"/>
</dbReference>
<dbReference type="DIP" id="DIP-2314N"/>
<dbReference type="FunCoup" id="P40477">
    <property type="interactions" value="190"/>
</dbReference>
<dbReference type="IntAct" id="P40477">
    <property type="interactions" value="19"/>
</dbReference>
<dbReference type="MINT" id="P40477"/>
<dbReference type="STRING" id="4932.YIL115C"/>
<dbReference type="TCDB" id="1.I.1.1.1">
    <property type="family name" value="the nuclear pore complex (npc) family"/>
</dbReference>
<dbReference type="GlyGen" id="P40477">
    <property type="glycosylation" value="5 sites, 1 O-linked glycan (3 sites)"/>
</dbReference>
<dbReference type="iPTMnet" id="P40477"/>
<dbReference type="PaxDb" id="4932-YIL115C"/>
<dbReference type="PeptideAtlas" id="P40477"/>
<dbReference type="DNASU" id="854691"/>
<dbReference type="EnsemblFungi" id="YIL115C_mRNA">
    <property type="protein sequence ID" value="YIL115C"/>
    <property type="gene ID" value="YIL115C"/>
</dbReference>
<dbReference type="GeneID" id="854691"/>
<dbReference type="KEGG" id="sce:YIL115C"/>
<dbReference type="AGR" id="SGD:S000001377"/>
<dbReference type="SGD" id="S000001377">
    <property type="gene designation" value="NUP159"/>
</dbReference>
<dbReference type="VEuPathDB" id="FungiDB:YIL115C"/>
<dbReference type="eggNOG" id="KOG3630">
    <property type="taxonomic scope" value="Eukaryota"/>
</dbReference>
<dbReference type="HOGENOM" id="CLU_250354_0_0_1"/>
<dbReference type="InParanoid" id="P40477"/>
<dbReference type="OMA" id="NIYTWRI"/>
<dbReference type="OrthoDB" id="248320at2759"/>
<dbReference type="BioCyc" id="YEAST:G3O-31369-MONOMER"/>
<dbReference type="BioGRID-ORCS" id="854691">
    <property type="hits" value="8 hits in 10 CRISPR screens"/>
</dbReference>
<dbReference type="EvolutionaryTrace" id="P40477"/>
<dbReference type="PRO" id="PR:P40477"/>
<dbReference type="Proteomes" id="UP000002311">
    <property type="component" value="Chromosome IX"/>
</dbReference>
<dbReference type="RNAct" id="P40477">
    <property type="molecule type" value="protein"/>
</dbReference>
<dbReference type="GO" id="GO:0005635">
    <property type="term" value="C:nuclear envelope"/>
    <property type="evidence" value="ECO:0000303"/>
    <property type="project" value="ComplexPortal"/>
</dbReference>
<dbReference type="GO" id="GO:0031965">
    <property type="term" value="C:nuclear membrane"/>
    <property type="evidence" value="ECO:0007669"/>
    <property type="project" value="UniProtKB-SubCell"/>
</dbReference>
<dbReference type="GO" id="GO:0005643">
    <property type="term" value="C:nuclear pore"/>
    <property type="evidence" value="ECO:0000314"/>
    <property type="project" value="SGD"/>
</dbReference>
<dbReference type="GO" id="GO:0044613">
    <property type="term" value="C:nuclear pore central transport channel"/>
    <property type="evidence" value="ECO:0000314"/>
    <property type="project" value="SGD"/>
</dbReference>
<dbReference type="GO" id="GO:0044614">
    <property type="term" value="C:nuclear pore cytoplasmic filaments"/>
    <property type="evidence" value="ECO:0000314"/>
    <property type="project" value="SGD"/>
</dbReference>
<dbReference type="GO" id="GO:0005634">
    <property type="term" value="C:nucleus"/>
    <property type="evidence" value="ECO:0000318"/>
    <property type="project" value="GO_Central"/>
</dbReference>
<dbReference type="GO" id="GO:0000774">
    <property type="term" value="F:adenyl-nucleotide exchange factor activity"/>
    <property type="evidence" value="ECO:0000314"/>
    <property type="project" value="SGD"/>
</dbReference>
<dbReference type="GO" id="GO:0017056">
    <property type="term" value="F:structural constituent of nuclear pore"/>
    <property type="evidence" value="ECO:0000353"/>
    <property type="project" value="SGD"/>
</dbReference>
<dbReference type="GO" id="GO:0003714">
    <property type="term" value="F:transcription corepressor activity"/>
    <property type="evidence" value="ECO:0000318"/>
    <property type="project" value="GO_Central"/>
</dbReference>
<dbReference type="GO" id="GO:0006607">
    <property type="term" value="P:NLS-bearing protein import into nucleus"/>
    <property type="evidence" value="ECO:0000316"/>
    <property type="project" value="SGD"/>
</dbReference>
<dbReference type="GO" id="GO:0051664">
    <property type="term" value="P:nuclear pore localization"/>
    <property type="evidence" value="ECO:0000315"/>
    <property type="project" value="SGD"/>
</dbReference>
<dbReference type="GO" id="GO:0006913">
    <property type="term" value="P:nucleocytoplasmic transport"/>
    <property type="evidence" value="ECO:0000303"/>
    <property type="project" value="ComplexPortal"/>
</dbReference>
<dbReference type="GO" id="GO:0016973">
    <property type="term" value="P:poly(A)+ mRNA export from nucleus"/>
    <property type="evidence" value="ECO:0000315"/>
    <property type="project" value="SGD"/>
</dbReference>
<dbReference type="GO" id="GO:0006611">
    <property type="term" value="P:protein export from nucleus"/>
    <property type="evidence" value="ECO:0000315"/>
    <property type="project" value="SGD"/>
</dbReference>
<dbReference type="GO" id="GO:0000055">
    <property type="term" value="P:ribosomal large subunit export from nucleus"/>
    <property type="evidence" value="ECO:0000315"/>
    <property type="project" value="SGD"/>
</dbReference>
<dbReference type="GO" id="GO:0000056">
    <property type="term" value="P:ribosomal small subunit export from nucleus"/>
    <property type="evidence" value="ECO:0000315"/>
    <property type="project" value="SGD"/>
</dbReference>
<dbReference type="GO" id="GO:0006405">
    <property type="term" value="P:RNA export from nucleus"/>
    <property type="evidence" value="ECO:0000315"/>
    <property type="project" value="SGD"/>
</dbReference>
<dbReference type="DisProt" id="DP01078"/>
<dbReference type="Gene3D" id="2.130.10.10">
    <property type="entry name" value="YVTN repeat-like/Quinoprotein amine dehydrogenase"/>
    <property type="match status" value="1"/>
</dbReference>
<dbReference type="InterPro" id="IPR039462">
    <property type="entry name" value="Nup159/Nup146_N"/>
</dbReference>
<dbReference type="InterPro" id="IPR015943">
    <property type="entry name" value="WD40/YVTN_repeat-like_dom_sf"/>
</dbReference>
<dbReference type="Pfam" id="PF16755">
    <property type="entry name" value="Beta-prop_NUP159_NUP214"/>
    <property type="match status" value="1"/>
</dbReference>
<dbReference type="SUPFAM" id="SSF117289">
    <property type="entry name" value="Nucleoporin domain"/>
    <property type="match status" value="1"/>
</dbReference>
<keyword id="KW-0002">3D-structure</keyword>
<keyword id="KW-0175">Coiled coil</keyword>
<keyword id="KW-0472">Membrane</keyword>
<keyword id="KW-0509">mRNA transport</keyword>
<keyword id="KW-0906">Nuclear pore complex</keyword>
<keyword id="KW-0539">Nucleus</keyword>
<keyword id="KW-0597">Phosphoprotein</keyword>
<keyword id="KW-0653">Protein transport</keyword>
<keyword id="KW-1185">Reference proteome</keyword>
<keyword id="KW-0677">Repeat</keyword>
<keyword id="KW-0811">Translocation</keyword>
<keyword id="KW-0813">Transport</keyword>
<feature type="chain" id="PRO_0000204849" description="Nucleoporin NUP159">
    <location>
        <begin position="1"/>
        <end position="1460"/>
    </location>
</feature>
<feature type="repeat" description="FG 1">
    <location>
        <begin position="228"/>
        <end position="231"/>
    </location>
</feature>
<feature type="repeat" description="PXFG 1">
    <location>
        <begin position="267"/>
        <end position="270"/>
    </location>
</feature>
<feature type="repeat" description="SXFGXPXFG 1">
    <location>
        <begin position="462"/>
        <end position="470"/>
    </location>
</feature>
<feature type="repeat" description="SXFGXPXFG 2; approximate">
    <location>
        <begin position="503"/>
        <end position="511"/>
    </location>
</feature>
<feature type="repeat" description="SXFGXPXFG 3; approximate">
    <location>
        <begin position="522"/>
        <end position="530"/>
    </location>
</feature>
<feature type="repeat" description="PXFG 2">
    <location>
        <begin position="532"/>
        <end position="535"/>
    </location>
</feature>
<feature type="repeat" description="SXFGXPXFG 4">
    <location>
        <begin position="548"/>
        <end position="556"/>
    </location>
</feature>
<feature type="repeat" description="PXFG 3">
    <location>
        <begin position="558"/>
        <end position="561"/>
    </location>
</feature>
<feature type="repeat" description="SXFGXPXFG 5">
    <location>
        <begin position="574"/>
        <end position="582"/>
    </location>
</feature>
<feature type="repeat" description="PXFG 4">
    <location>
        <begin position="584"/>
        <end position="587"/>
    </location>
</feature>
<feature type="repeat" description="SXFGXPXFG 6">
    <location>
        <begin position="600"/>
        <end position="608"/>
    </location>
</feature>
<feature type="repeat" description="SXFG 1">
    <location>
        <begin position="610"/>
        <end position="613"/>
    </location>
</feature>
<feature type="repeat" description="SXFGXPXFG 7; approximate">
    <location>
        <begin position="624"/>
        <end position="632"/>
    </location>
</feature>
<feature type="repeat" description="FG 2">
    <location>
        <begin position="642"/>
        <end position="645"/>
    </location>
</feature>
<feature type="repeat" description="FG 3">
    <location>
        <begin position="687"/>
        <end position="690"/>
    </location>
</feature>
<feature type="repeat" description="FXFG 1">
    <location>
        <begin position="704"/>
        <end position="707"/>
    </location>
</feature>
<feature type="repeat" description="SXFG 2">
    <location>
        <begin position="709"/>
        <end position="712"/>
    </location>
</feature>
<feature type="repeat" description="FXFG 2">
    <location>
        <begin position="728"/>
        <end position="731"/>
    </location>
</feature>
<feature type="repeat" description="PXFG 5">
    <location>
        <begin position="842"/>
        <end position="845"/>
    </location>
</feature>
<feature type="repeat" description="FXFG 3">
    <location>
        <begin position="873"/>
        <end position="876"/>
    </location>
</feature>
<feature type="region of interest" description="Interaction with DBP5">
    <location>
        <begin position="1"/>
        <end position="500"/>
    </location>
</feature>
<feature type="region of interest" description="Disordered" evidence="1">
    <location>
        <begin position="401"/>
        <end position="435"/>
    </location>
</feature>
<feature type="region of interest" description="Disordered" evidence="1">
    <location>
        <begin position="483"/>
        <end position="504"/>
    </location>
</feature>
<feature type="region of interest" description="Interactions with CRM1 and GLE1">
    <location>
        <begin position="497"/>
        <end position="701"/>
    </location>
</feature>
<feature type="region of interest" description="Disordered" evidence="1">
    <location>
        <begin position="533"/>
        <end position="619"/>
    </location>
</feature>
<feature type="region of interest" description="Disordered" evidence="1">
    <location>
        <begin position="647"/>
        <end position="704"/>
    </location>
</feature>
<feature type="region of interest" description="Disordered" evidence="1">
    <location>
        <begin position="727"/>
        <end position="824"/>
    </location>
</feature>
<feature type="region of interest" description="Disordered" evidence="1">
    <location>
        <begin position="861"/>
        <end position="1092"/>
    </location>
</feature>
<feature type="region of interest" description="Interaction with DYN2" evidence="14 17">
    <location>
        <begin position="1086"/>
        <end position="1175"/>
    </location>
</feature>
<feature type="region of interest" description="Interaction with NUP82" evidence="19">
    <location>
        <begin position="1223"/>
        <end position="1460"/>
    </location>
</feature>
<feature type="coiled-coil region">
    <location>
        <begin position="1279"/>
        <end position="1320"/>
    </location>
</feature>
<feature type="coiled-coil region">
    <location>
        <begin position="1383"/>
        <end position="1418"/>
    </location>
</feature>
<feature type="compositionally biased region" description="Polar residues" evidence="1">
    <location>
        <begin position="536"/>
        <end position="546"/>
    </location>
</feature>
<feature type="compositionally biased region" description="Polar residues" evidence="1">
    <location>
        <begin position="556"/>
        <end position="567"/>
    </location>
</feature>
<feature type="compositionally biased region" description="Polar residues" evidence="1">
    <location>
        <begin position="582"/>
        <end position="593"/>
    </location>
</feature>
<feature type="compositionally biased region" description="Polar residues" evidence="1">
    <location>
        <begin position="607"/>
        <end position="619"/>
    </location>
</feature>
<feature type="compositionally biased region" description="Low complexity" evidence="1">
    <location>
        <begin position="683"/>
        <end position="704"/>
    </location>
</feature>
<feature type="compositionally biased region" description="Polar residues" evidence="1">
    <location>
        <begin position="727"/>
        <end position="750"/>
    </location>
</feature>
<feature type="compositionally biased region" description="Polar residues" evidence="1">
    <location>
        <begin position="757"/>
        <end position="767"/>
    </location>
</feature>
<feature type="compositionally biased region" description="Polar residues" evidence="1">
    <location>
        <begin position="778"/>
        <end position="800"/>
    </location>
</feature>
<feature type="compositionally biased region" description="Acidic residues" evidence="1">
    <location>
        <begin position="804"/>
        <end position="814"/>
    </location>
</feature>
<feature type="compositionally biased region" description="Polar residues" evidence="1">
    <location>
        <begin position="861"/>
        <end position="889"/>
    </location>
</feature>
<feature type="compositionally biased region" description="Basic and acidic residues" evidence="1">
    <location>
        <begin position="917"/>
        <end position="936"/>
    </location>
</feature>
<feature type="compositionally biased region" description="Polar residues" evidence="1">
    <location>
        <begin position="942"/>
        <end position="958"/>
    </location>
</feature>
<feature type="compositionally biased region" description="Basic and acidic residues" evidence="1">
    <location>
        <begin position="960"/>
        <end position="1002"/>
    </location>
</feature>
<feature type="compositionally biased region" description="Basic and acidic residues" evidence="1">
    <location>
        <begin position="1017"/>
        <end position="1027"/>
    </location>
</feature>
<feature type="compositionally biased region" description="Basic and acidic residues" evidence="1">
    <location>
        <begin position="1035"/>
        <end position="1061"/>
    </location>
</feature>
<feature type="compositionally biased region" description="Basic and acidic residues" evidence="1">
    <location>
        <begin position="1068"/>
        <end position="1092"/>
    </location>
</feature>
<feature type="modified residue" description="Phosphoserine" evidence="22 24">
    <location>
        <position position="404"/>
    </location>
</feature>
<feature type="modified residue" description="Phosphoserine" evidence="23">
    <location>
        <position position="657"/>
    </location>
</feature>
<feature type="modified residue" description="Phosphoserine" evidence="23">
    <location>
        <position position="724"/>
    </location>
</feature>
<feature type="modified residue" description="Phosphoserine" evidence="22 23 24">
    <location>
        <position position="735"/>
    </location>
</feature>
<feature type="modified residue" description="Phosphoserine" evidence="23">
    <location>
        <position position="745"/>
    </location>
</feature>
<feature type="modified residue" description="Phosphothreonine" evidence="22 24">
    <location>
        <position position="803"/>
    </location>
</feature>
<feature type="modified residue" description="Phosphoserine" evidence="22 23 24">
    <location>
        <position position="805"/>
    </location>
</feature>
<feature type="modified residue" description="Phosphoserine" evidence="22 23 24">
    <location>
        <position position="819"/>
    </location>
</feature>
<feature type="modified residue" description="Phosphoserine" evidence="23">
    <location>
        <position position="889"/>
    </location>
</feature>
<feature type="modified residue" description="Phosphoserine" evidence="23 24">
    <location>
        <position position="940"/>
    </location>
</feature>
<feature type="strand" evidence="25">
    <location>
        <begin position="10"/>
        <end position="15"/>
    </location>
</feature>
<feature type="strand" evidence="25">
    <location>
        <begin position="17"/>
        <end position="25"/>
    </location>
</feature>
<feature type="strand" evidence="25">
    <location>
        <begin position="42"/>
        <end position="45"/>
    </location>
</feature>
<feature type="turn" evidence="25">
    <location>
        <begin position="46"/>
        <end position="49"/>
    </location>
</feature>
<feature type="strand" evidence="25">
    <location>
        <begin position="50"/>
        <end position="55"/>
    </location>
</feature>
<feature type="strand" evidence="25">
    <location>
        <begin position="58"/>
        <end position="63"/>
    </location>
</feature>
<feature type="helix" evidence="25">
    <location>
        <begin position="64"/>
        <end position="72"/>
    </location>
</feature>
<feature type="strand" evidence="25">
    <location>
        <begin position="73"/>
        <end position="75"/>
    </location>
</feature>
<feature type="strand" evidence="25">
    <location>
        <begin position="81"/>
        <end position="85"/>
    </location>
</feature>
<feature type="strand" evidence="25">
    <location>
        <begin position="89"/>
        <end position="95"/>
    </location>
</feature>
<feature type="strand" evidence="25">
    <location>
        <begin position="98"/>
        <end position="114"/>
    </location>
</feature>
<feature type="strand" evidence="25">
    <location>
        <begin position="118"/>
        <end position="123"/>
    </location>
</feature>
<feature type="strand" evidence="25">
    <location>
        <begin position="128"/>
        <end position="133"/>
    </location>
</feature>
<feature type="strand" evidence="25">
    <location>
        <begin position="135"/>
        <end position="142"/>
    </location>
</feature>
<feature type="strand" evidence="25">
    <location>
        <begin position="145"/>
        <end position="151"/>
    </location>
</feature>
<feature type="turn" evidence="25">
    <location>
        <begin position="152"/>
        <end position="154"/>
    </location>
</feature>
<feature type="strand" evidence="25">
    <location>
        <begin position="157"/>
        <end position="169"/>
    </location>
</feature>
<feature type="strand" evidence="25">
    <location>
        <begin position="171"/>
        <end position="178"/>
    </location>
</feature>
<feature type="strand" evidence="25">
    <location>
        <begin position="183"/>
        <end position="189"/>
    </location>
</feature>
<feature type="strand" evidence="25">
    <location>
        <begin position="192"/>
        <end position="199"/>
    </location>
</feature>
<feature type="helix" evidence="25">
    <location>
        <begin position="203"/>
        <end position="206"/>
    </location>
</feature>
<feature type="turn" evidence="25">
    <location>
        <begin position="210"/>
        <end position="212"/>
    </location>
</feature>
<feature type="strand" evidence="25">
    <location>
        <begin position="213"/>
        <end position="231"/>
    </location>
</feature>
<feature type="strand" evidence="25">
    <location>
        <begin position="245"/>
        <end position="253"/>
    </location>
</feature>
<feature type="strand" evidence="25">
    <location>
        <begin position="256"/>
        <end position="265"/>
    </location>
</feature>
<feature type="strand" evidence="25">
    <location>
        <begin position="278"/>
        <end position="284"/>
    </location>
</feature>
<feature type="strand" evidence="25">
    <location>
        <begin position="286"/>
        <end position="288"/>
    </location>
</feature>
<feature type="strand" evidence="25">
    <location>
        <begin position="292"/>
        <end position="298"/>
    </location>
</feature>
<feature type="strand" evidence="25">
    <location>
        <begin position="305"/>
        <end position="307"/>
    </location>
</feature>
<feature type="strand" evidence="25">
    <location>
        <begin position="309"/>
        <end position="317"/>
    </location>
</feature>
<feature type="helix" evidence="25">
    <location>
        <begin position="318"/>
        <end position="320"/>
    </location>
</feature>
<feature type="turn" evidence="25">
    <location>
        <begin position="328"/>
        <end position="330"/>
    </location>
</feature>
<feature type="strand" evidence="25">
    <location>
        <begin position="336"/>
        <end position="342"/>
    </location>
</feature>
<feature type="strand" evidence="25">
    <location>
        <begin position="364"/>
        <end position="369"/>
    </location>
</feature>
<feature type="strand" evidence="25">
    <location>
        <begin position="372"/>
        <end position="380"/>
    </location>
</feature>
<feature type="strand" evidence="27">
    <location>
        <begin position="1118"/>
        <end position="1123"/>
    </location>
</feature>
<feature type="helix" evidence="26">
    <location>
        <begin position="1436"/>
        <end position="1454"/>
    </location>
</feature>
<sequence>MSSLKDEVPTETSEDFGFKFLGQKQILPSFNEKLPFASLQNLDISNSKSLFVAASGSKAVVGELQLLRDHITSDSTPLTFKWEKEIPDVIFVCFHGDQVLVSTRNALYSLDLEELSEFRTVTSFEKPVFQLKNVNNTLVILNSVNDLSALDLRTKSTKQLAQNVTSFDVTNSQLAVLLKDRSFQSFAWRNGEMEKQFEFSLPSELEELPVEEYSPLSVTILSPQDFLAVFGNVISETDDEVSYDQKMYIIKHIDGSASFQETFDITPPFGQIVRFPYMYKVTLSGLIEPDANVNVLASSCSSEVSIWDSKQVIEPSQDSERAVLPISEETDKDTNPIGVAVDVVTSGTILEPCSGVDTIERLPLVYILNNEGSLQIVGLFHVAAIKSGHYSINLESLEHEKSLSPTSEKIPIAGQEQEEKKKNNESSKALSENPFTSANTSGFTFLKTQPAAANSLQSQSSSTFGAPSFGSSAFKIDLPSVSSTSTGVASSEQDATDPASAKPVFGKPAFGAIAKEPSTSEYAFGKPSFGAPSFGSGKSSVESPASGSAFGKPSFGTPSFGSGNSSVEPPASGSAFGKPSFGTPSFGSGNSSAEPPASGSAFGKPSFGTSAFGTASSNETNSGSIFGKAAFGSSSFAPANNELFGSNFTISKPTVDSPKEVDSTSPFPSSGDQSEDESKSDVDSSSTPFGTKPNTSTKPKTNAFDFGSSSFGSGFSKALESVGSDTTFKFGTQASPFSSQLGNKSPFSSFTKDDTENGSLSKGSTSEINDDNEEHESNGPNVSGNDLTDSTVEQTSSTRLPETPSDEDGEVVEEEAQKSPIGKLTETIKKSANIDMAGLKNPVFGNHVKAKSESPFSAFATNITKPSSTTPAFSFGNSTMNKSNTSTVSPMEEADTKETSEKGPITLKSVENPFLPAKEERTGESSKKDHNDDPKDGYVSGSEISVRTSESAFDTTANEEIPKSQDVNNHEKSETDPKYSQHAVVDHDNKSKEMNETSKNNERSGQPNHGVQGDGIALKKDNEKENFDSNMAIKQFEDHQSSEEDASEKDSRQSSEVKESDDNMSLNSDRDESISESYDKLEDINTDELPHGGEAFKAREVSASADFDVQTSLEDNYAESGIQTDLSESSKENEVQTDAIPVKHNSTQTVKKEAVDNGLQTEPVETCNFSVQTFEGDENYLAEQCKPKQLKEYYTSAKVSNIPFVSQNSTLRLIESTFQTVEAEFTVLMENIRNMDTFFTDQSSIPLVKRTVRSINNLYTWRIPEAEILLNIQNNIKCEQMQITNANIQDLKEKVTDYVRKDIAQITEDVANAKEEYLFLMHFDDASSGYVKDLSTHQFRMQKTLRQKLFDVSAKINHTEELLNILKLFTVKNKRLDDNPLVAKLAKESLARDGLLKEIKLLREQVSRLQLEEKGKKASSFDASSSITKDMKGFKVVEVGLAMNTKKQIGDFFKNLNMAK</sequence>
<accession>P40477</accession>
<accession>D6VVH2</accession>
<reference key="1">
    <citation type="journal article" date="1995" name="J. Cell Biol.">
        <title>A conditional allele of the novel repeat-containing yeast nucleoporin RAT7/NUP159 causes both rapid cessation of mRNA export and reversible clustering of nuclear pore complexes.</title>
        <authorList>
            <person name="Gorsch L.C."/>
            <person name="Dockendorff T.C."/>
            <person name="Cole C.N."/>
        </authorList>
    </citation>
    <scope>NUCLEOTIDE SEQUENCE [GENOMIC DNA]</scope>
</reference>
<reference key="2">
    <citation type="journal article" date="1997" name="Nature">
        <title>The nucleotide sequence of Saccharomyces cerevisiae chromosome IX.</title>
        <authorList>
            <person name="Churcher C.M."/>
            <person name="Bowman S."/>
            <person name="Badcock K."/>
            <person name="Bankier A.T."/>
            <person name="Brown D."/>
            <person name="Chillingworth T."/>
            <person name="Connor R."/>
            <person name="Devlin K."/>
            <person name="Gentles S."/>
            <person name="Hamlin N."/>
            <person name="Harris D.E."/>
            <person name="Horsnell T."/>
            <person name="Hunt S."/>
            <person name="Jagels K."/>
            <person name="Jones M."/>
            <person name="Lye G."/>
            <person name="Moule S."/>
            <person name="Odell C."/>
            <person name="Pearson D."/>
            <person name="Rajandream M.A."/>
            <person name="Rice P."/>
            <person name="Rowley N."/>
            <person name="Skelton J."/>
            <person name="Smith V."/>
            <person name="Walsh S.V."/>
            <person name="Whitehead S."/>
            <person name="Barrell B.G."/>
        </authorList>
    </citation>
    <scope>NUCLEOTIDE SEQUENCE [LARGE SCALE GENOMIC DNA]</scope>
    <source>
        <strain>ATCC 204508 / S288c</strain>
    </source>
</reference>
<reference key="3">
    <citation type="journal article" date="2014" name="G3 (Bethesda)">
        <title>The reference genome sequence of Saccharomyces cerevisiae: Then and now.</title>
        <authorList>
            <person name="Engel S.R."/>
            <person name="Dietrich F.S."/>
            <person name="Fisk D.G."/>
            <person name="Binkley G."/>
            <person name="Balakrishnan R."/>
            <person name="Costanzo M.C."/>
            <person name="Dwight S.S."/>
            <person name="Hitz B.C."/>
            <person name="Karra K."/>
            <person name="Nash R.S."/>
            <person name="Weng S."/>
            <person name="Wong E.D."/>
            <person name="Lloyd P."/>
            <person name="Skrzypek M.S."/>
            <person name="Miyasato S.R."/>
            <person name="Simison M."/>
            <person name="Cherry J.M."/>
        </authorList>
    </citation>
    <scope>GENOME REANNOTATION</scope>
    <source>
        <strain>ATCC 204508 / S288c</strain>
    </source>
</reference>
<reference key="4">
    <citation type="journal article" date="1998" name="Proc. Natl. Acad. Sci. U.S.A.">
        <title>Two yeast nuclear pore complex proteins involved in mRNA export form a cytoplasmically oriented subcomplex.</title>
        <authorList>
            <person name="Hurwitz M.E."/>
            <person name="Strambio-de-Castillia C."/>
            <person name="Blobel G."/>
        </authorList>
    </citation>
    <scope>FUNCTION</scope>
    <scope>INTERACTION WITH NUP82</scope>
</reference>
<reference key="5">
    <citation type="journal article" date="1998" name="Mol. Biol. Cell">
        <title>Functional characterization of a Nup159p-containing nuclear pore subcomplex.</title>
        <authorList>
            <person name="Belgareh N."/>
            <person name="Snay-Hodge C."/>
            <person name="Pasteau F."/>
            <person name="Dagher S."/>
            <person name="Cole C.N."/>
            <person name="Doye V."/>
        </authorList>
    </citation>
    <scope>FUNCTION</scope>
    <scope>INTERACTION WITH NSP1</scope>
</reference>
<reference key="6">
    <citation type="journal article" date="1999" name="Mol. Cell. Biol.">
        <title>Interactions between a nuclear transporter and a subset of nuclear pore complex proteins depend on Ran GTPase.</title>
        <authorList>
            <person name="Seedorf M."/>
            <person name="Damelin M."/>
            <person name="Kahana J."/>
            <person name="Taura T."/>
            <person name="Silver P.A."/>
        </authorList>
    </citation>
    <scope>FUNCTION</scope>
    <scope>INTERACTION WITH PSE1</scope>
</reference>
<reference key="7">
    <citation type="journal article" date="1999" name="EMBO J.">
        <title>Rat8p/Dbp5p is a shuttling transport factor that interacts with Rat7p/Nup159p and Gle1p and suppresses the mRNA export defect of xpo1-1 cells.</title>
        <authorList>
            <person name="Hodge C.A."/>
            <person name="Colot H.V."/>
            <person name="Stafford P."/>
            <person name="Cole C.N."/>
        </authorList>
    </citation>
    <scope>FUNCTION</scope>
    <scope>INTERACTION WITH GLE1; CRM1 AND DBP5</scope>
</reference>
<reference key="8">
    <citation type="journal article" date="2000" name="J. Biol. Chem.">
        <title>Nup116p associates with the Nup82p-Nsp1p-Nup159p nucleoporin complex.</title>
        <authorList>
            <person name="Bailer S.M."/>
            <person name="Balduf C."/>
            <person name="Katahira J."/>
            <person name="Podtelejnikov A."/>
            <person name="Rollenhagen C."/>
            <person name="Mann M."/>
            <person name="Pante N."/>
            <person name="Hurt E.C."/>
        </authorList>
    </citation>
    <scope>FUNCTION</scope>
    <scope>NUP82 NPC SUBCOMPLEX</scope>
</reference>
<reference key="9">
    <citation type="journal article" date="2000" name="J. Cell Biol.">
        <title>The yeast nuclear pore complex: composition, architecture, and transport mechanism.</title>
        <authorList>
            <person name="Rout M.P."/>
            <person name="Aitchison J.D."/>
            <person name="Suprapto A."/>
            <person name="Hjertaas K."/>
            <person name="Zhao Y."/>
            <person name="Chait B.T."/>
        </authorList>
    </citation>
    <scope>CHARACTERIZATION</scope>
    <scope>NPC SUBUNIT LOCATION</scope>
</reference>
<reference key="10">
    <citation type="journal article" date="2000" name="J. Cell Biol.">
        <title>Binding of the Mex67p/Mtr2p heterodimer to FXFG, GLFG, and FG repeat nucleoporins is essential for nuclear mRNA export.</title>
        <authorList>
            <person name="Straesser K."/>
            <person name="Bassler J."/>
            <person name="Hurt E.C."/>
        </authorList>
    </citation>
    <scope>FUNCTION</scope>
    <scope>INTERACTION WITH MEX67/MTR2 HETERODIMER</scope>
</reference>
<reference key="11">
    <citation type="journal article" date="2001" name="J. Biol. Chem.">
        <title>Proteomic analysis of nucleoporin interacting proteins.</title>
        <authorList>
            <person name="Allen N.P."/>
            <person name="Huang L."/>
            <person name="Burlingame A."/>
            <person name="Rexach M."/>
        </authorList>
    </citation>
    <scope>FUNCTION</scope>
    <scope>INTERACTION WITH KARYOPHERINS THROUGH FG REPEATS</scope>
</reference>
<reference key="12">
    <citation type="journal article" date="2001" name="J. Cell Biol.">
        <title>Ultrastructural localization of rRNA shows defective nuclear export of preribosomes in mutants of the Nup82p complex.</title>
        <authorList>
            <person name="Gleizes P.-E."/>
            <person name="Noaillac-Depeyre J."/>
            <person name="Leger-Silvestre I."/>
            <person name="Teulieres F."/>
            <person name="Dauxois J.-Y."/>
            <person name="Pommet D."/>
            <person name="Azum-Gelade M.-C."/>
            <person name="Gas N."/>
        </authorList>
    </citation>
    <scope>FUNCTION</scope>
    <scope>PRE-RIBOSOME EXPORT</scope>
</reference>
<reference key="13">
    <citation type="journal article" date="2001" name="Mol. Cell. Biol.">
        <title>The Nsp1p carboxy-terminal domain is organized into functionally distinct coiled-coil regions required for assembly of nucleoporin subcomplexes and nucleocytoplasmic transport.</title>
        <authorList>
            <person name="Bailer S.M."/>
            <person name="Balduf C."/>
            <person name="Hurt E.C."/>
        </authorList>
    </citation>
    <scope>FUNCTION</scope>
    <scope>NPC ASSEMBLY</scope>
</reference>
<reference key="14">
    <citation type="journal article" date="2002" name="Mol. Cell. Proteomics">
        <title>Deciphering networks of protein interactions at the nuclear pore complex.</title>
        <authorList>
            <person name="Allen N.P."/>
            <person name="Patel S.S."/>
            <person name="Huang L."/>
            <person name="Chalkley R.J."/>
            <person name="Burlingame A."/>
            <person name="Lutzmann M."/>
            <person name="Hurt E.C."/>
            <person name="Rexach M."/>
        </authorList>
    </citation>
    <scope>FUNCTION</scope>
    <scope>INTERACTION WITH CRM1 AND RNA1</scope>
</reference>
<reference key="15">
    <citation type="journal article" date="2003" name="Nature">
        <title>Global analysis of protein expression in yeast.</title>
        <authorList>
            <person name="Ghaemmaghami S."/>
            <person name="Huh W.-K."/>
            <person name="Bower K."/>
            <person name="Howson R.W."/>
            <person name="Belle A."/>
            <person name="Dephoure N."/>
            <person name="O'Shea E.K."/>
            <person name="Weissman J.S."/>
        </authorList>
    </citation>
    <scope>LEVEL OF PROTEIN EXPRESSION [LARGE SCALE ANALYSIS]</scope>
</reference>
<reference key="16">
    <citation type="journal article" date="2003" name="Proc. Natl. Acad. Sci. U.S.A.">
        <title>Disorder in the nuclear pore complex: the FG repeat regions of nucleoporins are natively unfolded.</title>
        <authorList>
            <person name="Denning D.P."/>
            <person name="Patel S.S."/>
            <person name="Uversky V."/>
            <person name="Fink A.L."/>
            <person name="Rexach M."/>
        </authorList>
    </citation>
    <scope>FUNCTION</scope>
    <scope>FG REPEAT STRUCTURE</scope>
</reference>
<reference key="17">
    <citation type="journal article" date="2004" name="Nat. Cell Biol.">
        <title>Minimal nuclear pore complexes define FG repeat domains essential for transport.</title>
        <authorList>
            <person name="Strawn L.A."/>
            <person name="Shen T.X."/>
            <person name="Shulga N."/>
            <person name="Goldfarb D.S."/>
            <person name="Wente S.R."/>
        </authorList>
    </citation>
    <scope>FUNCTION</scope>
    <scope>FG REPEATS IN NPC TRANSPORT</scope>
</reference>
<reference key="18">
    <citation type="journal article" date="2003" name="Dev. Cell">
        <title>Peering through the pore: nuclear pore complex structure, assembly, and function.</title>
        <authorList>
            <person name="Suntharalingam M."/>
            <person name="Wente S.R."/>
        </authorList>
    </citation>
    <scope>REVIEW</scope>
</reference>
<reference key="19">
    <citation type="journal article" date="2007" name="J. Proteome Res.">
        <title>Large-scale phosphorylation analysis of alpha-factor-arrested Saccharomyces cerevisiae.</title>
        <authorList>
            <person name="Li X."/>
            <person name="Gerber S.A."/>
            <person name="Rudner A.D."/>
            <person name="Beausoleil S.A."/>
            <person name="Haas W."/>
            <person name="Villen J."/>
            <person name="Elias J.E."/>
            <person name="Gygi S.P."/>
        </authorList>
    </citation>
    <scope>PHOSPHORYLATION [LARGE SCALE ANALYSIS] AT SER-404; SER-735; THR-803; SER-805 AND SER-819</scope>
    <scope>IDENTIFICATION BY MASS SPECTROMETRY [LARGE SCALE ANALYSIS]</scope>
    <source>
        <strain>ADR376</strain>
    </source>
</reference>
<reference key="20">
    <citation type="journal article" date="2008" name="Mol. Cell. Proteomics">
        <title>A multidimensional chromatography technology for in-depth phosphoproteome analysis.</title>
        <authorList>
            <person name="Albuquerque C.P."/>
            <person name="Smolka M.B."/>
            <person name="Payne S.H."/>
            <person name="Bafna V."/>
            <person name="Eng J."/>
            <person name="Zhou H."/>
        </authorList>
    </citation>
    <scope>PHOSPHORYLATION [LARGE SCALE ANALYSIS] AT SER-657; SER-724; SER-735; SER-745; SER-805; SER-819; SER-889 AND SER-940</scope>
    <scope>IDENTIFICATION BY MASS SPECTROMETRY [LARGE SCALE ANALYSIS]</scope>
</reference>
<reference key="21">
    <citation type="journal article" date="2009" name="Science">
        <title>Global analysis of Cdk1 substrate phosphorylation sites provides insights into evolution.</title>
        <authorList>
            <person name="Holt L.J."/>
            <person name="Tuch B.B."/>
            <person name="Villen J."/>
            <person name="Johnson A.D."/>
            <person name="Gygi S.P."/>
            <person name="Morgan D.O."/>
        </authorList>
    </citation>
    <scope>PHOSPHORYLATION [LARGE SCALE ANALYSIS] AT SER-404; SER-735; THR-803; SER-805; SER-819 AND SER-940</scope>
    <scope>IDENTIFICATION BY MASS SPECTROMETRY [LARGE SCALE ANALYSIS]</scope>
</reference>
<reference key="22">
    <citation type="journal article" date="2007" name="Nat. Cell Biol.">
        <title>Molecular basis for the functional interaction of dynein light chain with the nuclear-pore complex.</title>
        <authorList>
            <person name="Stelter P."/>
            <person name="Kunze R."/>
            <person name="Flemming D."/>
            <person name="Hoepfner D."/>
            <person name="Diepholz M."/>
            <person name="Philippsen P."/>
            <person name="Boettcher B."/>
            <person name="Hurt E."/>
        </authorList>
    </citation>
    <scope>IDENTIFICATION BY MASS SPECTROMETRY</scope>
    <scope>INTERACTION WITH DYN2</scope>
    <scope>REGION</scope>
</reference>
<reference key="23">
    <citation type="journal article" date="2013" name="J. Biol. Chem.">
        <title>Multiple recognition motifs in nucleoporin Nup159 provide a stable and rigid Nup159-Dyn2 assembly.</title>
        <authorList>
            <person name="Nyarko A."/>
            <person name="Song Y."/>
            <person name="Novacek J."/>
            <person name="Zidek L."/>
            <person name="Barbar E."/>
        </authorList>
    </citation>
    <scope>INTERACTION WITH DYN2</scope>
    <scope>SUBCELLULAR LOCATION</scope>
    <scope>REGION</scope>
</reference>
<reference key="24">
    <citation type="journal article" date="2015" name="J. Cell Biol.">
        <title>Structural basis for assembly and function of the Nup82 complex in the nuclear pore scaffold.</title>
        <authorList>
            <person name="Gaik M."/>
            <person name="Flemming D."/>
            <person name="von Appen A."/>
            <person name="Kastritis P."/>
            <person name="Muecke N."/>
            <person name="Fischer J."/>
            <person name="Stelter P."/>
            <person name="Ori A."/>
            <person name="Bui K.H."/>
            <person name="Bassler J."/>
            <person name="Barbar E."/>
            <person name="Beck M."/>
            <person name="Hurt E."/>
        </authorList>
    </citation>
    <scope>INTERACTION WITH DYN2</scope>
    <scope>NUP82 NPC SUBCOMPLEX</scope>
    <scope>SUBCELLULAR LOCATION</scope>
</reference>
<reference key="25">
    <citation type="journal article" date="2004" name="Mol. Cell">
        <title>The N-terminal domain of Nup159 forms a beta-propeller that functions in mRNA export by tethering the helicase Dbp5 to the nuclear pore.</title>
        <authorList>
            <person name="Weirich C.S."/>
            <person name="Erzberger J.P."/>
            <person name="Berger J.M."/>
            <person name="Weis K."/>
        </authorList>
    </citation>
    <scope>X-RAY CRYSTALLOGRAPHY (2.5 ANGSTROMS) OF 2-387</scope>
    <scope>FUNCTION</scope>
    <scope>INTERACTION WITH DBP5</scope>
</reference>
<reference key="26">
    <citation type="journal article" date="2011" name="Proc. Natl. Acad. Sci. U.S.A.">
        <title>Structural and functional analysis of an essential nucleoporin heterotrimer on the cytoplasmic face of the nuclear pore complex.</title>
        <authorList>
            <person name="Yoshida K."/>
            <person name="Seo H.S."/>
            <person name="Debler E.W."/>
            <person name="Blobel G."/>
            <person name="Hoelz A."/>
        </authorList>
    </citation>
    <scope>X-RAY CRYSTALLOGRAPHY (2.6 ANGSTROMS) OF 1425-1460 IN COMPLEX WITH NUP82 AND NUP116</scope>
    <scope>SUBUNIT</scope>
</reference>
<reference key="27">
    <citation type="journal article" date="2012" name="J. Mol. Biol.">
        <title>Molecular basis for the anchoring of proto-oncoprotein Nup98 to the cytoplasmic face of the nuclear pore complex.</title>
        <authorList>
            <person name="Stuwe T."/>
            <person name="von Borzyskowski L.S."/>
            <person name="Davenport A.M."/>
            <person name="Hoelz A."/>
        </authorList>
    </citation>
    <scope>X-RAY CRYSTALLOGRAPHY (3.4 ANGSTROMS) OF 1425-1460 IN COMPLEX WITH NUP82 AND THE MOUSE ORTHOLOG OF NUP145</scope>
    <scope>SUBUNIT</scope>
</reference>
<organism>
    <name type="scientific">Saccharomyces cerevisiae (strain ATCC 204508 / S288c)</name>
    <name type="common">Baker's yeast</name>
    <dbReference type="NCBI Taxonomy" id="559292"/>
    <lineage>
        <taxon>Eukaryota</taxon>
        <taxon>Fungi</taxon>
        <taxon>Dikarya</taxon>
        <taxon>Ascomycota</taxon>
        <taxon>Saccharomycotina</taxon>
        <taxon>Saccharomycetes</taxon>
        <taxon>Saccharomycetales</taxon>
        <taxon>Saccharomycetaceae</taxon>
        <taxon>Saccharomyces</taxon>
    </lineage>
</organism>
<evidence type="ECO:0000256" key="1">
    <source>
        <dbReference type="SAM" id="MobiDB-lite"/>
    </source>
</evidence>
<evidence type="ECO:0000269" key="2">
    <source>
    </source>
</evidence>
<evidence type="ECO:0000269" key="3">
    <source>
    </source>
</evidence>
<evidence type="ECO:0000269" key="4">
    <source>
    </source>
</evidence>
<evidence type="ECO:0000269" key="5">
    <source>
    </source>
</evidence>
<evidence type="ECO:0000269" key="6">
    <source>
    </source>
</evidence>
<evidence type="ECO:0000269" key="7">
    <source>
    </source>
</evidence>
<evidence type="ECO:0000269" key="8">
    <source>
    </source>
</evidence>
<evidence type="ECO:0000269" key="9">
    <source>
    </source>
</evidence>
<evidence type="ECO:0000269" key="10">
    <source>
    </source>
</evidence>
<evidence type="ECO:0000269" key="11">
    <source>
    </source>
</evidence>
<evidence type="ECO:0000269" key="12">
    <source>
    </source>
</evidence>
<evidence type="ECO:0000269" key="13">
    <source>
    </source>
</evidence>
<evidence type="ECO:0000269" key="14">
    <source>
    </source>
</evidence>
<evidence type="ECO:0000269" key="15">
    <source>
    </source>
</evidence>
<evidence type="ECO:0000269" key="16">
    <source>
    </source>
</evidence>
<evidence type="ECO:0000269" key="17">
    <source>
    </source>
</evidence>
<evidence type="ECO:0000269" key="18">
    <source>
    </source>
</evidence>
<evidence type="ECO:0000269" key="19">
    <source>
    </source>
</evidence>
<evidence type="ECO:0000269" key="20">
    <source>
    </source>
</evidence>
<evidence type="ECO:0000269" key="21">
    <source>
    </source>
</evidence>
<evidence type="ECO:0007744" key="22">
    <source>
    </source>
</evidence>
<evidence type="ECO:0007744" key="23">
    <source>
    </source>
</evidence>
<evidence type="ECO:0007744" key="24">
    <source>
    </source>
</evidence>
<evidence type="ECO:0007829" key="25">
    <source>
        <dbReference type="PDB" id="1XIP"/>
    </source>
</evidence>
<evidence type="ECO:0007829" key="26">
    <source>
        <dbReference type="PDB" id="3PBP"/>
    </source>
</evidence>
<evidence type="ECO:0007829" key="27">
    <source>
        <dbReference type="PDB" id="4DS1"/>
    </source>
</evidence>
<gene>
    <name type="primary">NUP159</name>
    <name type="synonym">NUP158</name>
    <name type="synonym">RAT7</name>
    <name type="ordered locus">YIL115C</name>
</gene>